<feature type="transit peptide" description="Chloroplast" evidence="6">
    <location>
        <begin position="1"/>
        <end position="50"/>
    </location>
</feature>
<feature type="chain" id="PRO_0000453139" description="Chloroplast sensor kinase, chloroplastic">
    <location>
        <begin position="51"/>
        <end position="583"/>
    </location>
</feature>
<feature type="domain" description="Histidine kinase" evidence="2">
    <location>
        <begin position="447"/>
        <end position="583"/>
    </location>
</feature>
<feature type="region of interest" description="GAF" evidence="7">
    <location>
        <begin position="97"/>
        <end position="277"/>
    </location>
</feature>
<feature type="region of interest" description="Disordered" evidence="3">
    <location>
        <begin position="412"/>
        <end position="442"/>
    </location>
</feature>
<feature type="compositionally biased region" description="Low complexity" evidence="3">
    <location>
        <begin position="414"/>
        <end position="431"/>
    </location>
</feature>
<feature type="binding site" evidence="7">
    <location>
        <position position="115"/>
    </location>
    <ligand>
        <name>[3Fe-4S] cluster</name>
        <dbReference type="ChEBI" id="CHEBI:21137"/>
    </ligand>
</feature>
<feature type="modified residue" description="Phosphohistidine; by autocatalysis" evidence="2">
    <location>
        <position position="292"/>
    </location>
</feature>
<sequence>MSSIYLHGLSRRRRIGSVIVAIYMLDSCGAFLSASGSGRYPGFSYRGLSVVTENIRSIHSSRRLKLTVNATNKEMYERQDSIHTLPLSPIPVMPSQLFQELALSQLELLANSIPCADRPGVSKIKTMALYLPQENVNTGQLEFLPAIHYPHPSRERVFIANEAASGVAPALPRTLTTLPGFAHATSLLPGYPMVSGGSEASVGVVEEVICDLTSGAAALSVPLFSGSRTVGVLLVSPSISKRRKGSAWTKEDREQVGRAGKSLSLALSMDTERAALQMQNDRAARALSDSLHQIKNPLQAMRTYGKLLQRRIADLGLLSNEGMTPQLLEMAEHLLVQSDRLADRLKPVDTIVDSLSERTPFVLNPAAPTKTQDSLVSLATPLVPWESETLEFARESKTSGELVIFMPTKKVAASGSNGPSNSTTSFSGNGSDVSTYTEDDGAGEMPSSLFSEMDLEMSFLSDVLDPVLAAFRAIAEDRGIMFSHDDTEDLPGVTICPQALQEALINVIDNAFTYVFLPKPGSRFGPNPSAEVRIRLVQNSKGSDAGVTILVEDNGPGIPAETRDQIFDRGKDQALDWTLRKHW</sequence>
<keyword id="KW-0003">3Fe-4S</keyword>
<keyword id="KW-0150">Chloroplast</keyword>
<keyword id="KW-0408">Iron</keyword>
<keyword id="KW-0411">Iron-sulfur</keyword>
<keyword id="KW-0418">Kinase</keyword>
<keyword id="KW-0479">Metal-binding</keyword>
<keyword id="KW-0597">Phosphoprotein</keyword>
<keyword id="KW-0934">Plastid</keyword>
<keyword id="KW-1185">Reference proteome</keyword>
<keyword id="KW-0808">Transferase</keyword>
<keyword id="KW-0809">Transit peptide</keyword>
<name>CSK_PHATC</name>
<evidence type="ECO:0000250" key="1">
    <source>
        <dbReference type="UniProtKB" id="F4HVG8"/>
    </source>
</evidence>
<evidence type="ECO:0000255" key="2">
    <source>
        <dbReference type="PROSITE-ProRule" id="PRU00107"/>
    </source>
</evidence>
<evidence type="ECO:0000256" key="3">
    <source>
        <dbReference type="SAM" id="MobiDB-lite"/>
    </source>
</evidence>
<evidence type="ECO:0000269" key="4">
    <source>
    </source>
</evidence>
<evidence type="ECO:0000303" key="5">
    <source>
    </source>
</evidence>
<evidence type="ECO:0000305" key="6">
    <source>
    </source>
</evidence>
<evidence type="ECO:0000305" key="7">
    <source>
    </source>
</evidence>
<evidence type="ECO:0000312" key="8">
    <source>
        <dbReference type="EMBL" id="EEC43310.1"/>
    </source>
</evidence>
<protein>
    <recommendedName>
        <fullName evidence="5">Chloroplast sensor kinase, chloroplastic</fullName>
        <ecNumber>2.7.13.3</ecNumber>
    </recommendedName>
</protein>
<dbReference type="EC" id="2.7.13.3"/>
<dbReference type="EMBL" id="CM000630">
    <property type="protein sequence ID" value="EEC43310.1"/>
    <property type="status" value="ALT_INIT"/>
    <property type="molecule type" value="Genomic_DNA"/>
</dbReference>
<dbReference type="RefSeq" id="XP_002185178.1">
    <property type="nucleotide sequence ID" value="XM_002185142.1"/>
</dbReference>
<dbReference type="STRING" id="556484.B7GDS0"/>
<dbReference type="PaxDb" id="2850-Phatr41268"/>
<dbReference type="GeneID" id="7198991"/>
<dbReference type="KEGG" id="pti:PHATRDRAFT_41268"/>
<dbReference type="eggNOG" id="ENOG502S572">
    <property type="taxonomic scope" value="Eukaryota"/>
</dbReference>
<dbReference type="HOGENOM" id="CLU_493029_0_0_1"/>
<dbReference type="InParanoid" id="B7GDS0"/>
<dbReference type="OrthoDB" id="43364at2759"/>
<dbReference type="Proteomes" id="UP000000759">
    <property type="component" value="Chromosome 28"/>
</dbReference>
<dbReference type="GO" id="GO:0009570">
    <property type="term" value="C:chloroplast stroma"/>
    <property type="evidence" value="ECO:0007669"/>
    <property type="project" value="UniProtKB-SubCell"/>
</dbReference>
<dbReference type="GO" id="GO:0005886">
    <property type="term" value="C:plasma membrane"/>
    <property type="evidence" value="ECO:0007669"/>
    <property type="project" value="TreeGrafter"/>
</dbReference>
<dbReference type="GO" id="GO:0051538">
    <property type="term" value="F:3 iron, 4 sulfur cluster binding"/>
    <property type="evidence" value="ECO:0007669"/>
    <property type="project" value="UniProtKB-KW"/>
</dbReference>
<dbReference type="GO" id="GO:0046872">
    <property type="term" value="F:metal ion binding"/>
    <property type="evidence" value="ECO:0007669"/>
    <property type="project" value="UniProtKB-KW"/>
</dbReference>
<dbReference type="GO" id="GO:0004673">
    <property type="term" value="F:protein histidine kinase activity"/>
    <property type="evidence" value="ECO:0007669"/>
    <property type="project" value="UniProtKB-EC"/>
</dbReference>
<dbReference type="GO" id="GO:0000160">
    <property type="term" value="P:phosphorelay signal transduction system"/>
    <property type="evidence" value="ECO:0007669"/>
    <property type="project" value="TreeGrafter"/>
</dbReference>
<dbReference type="CDD" id="cd00075">
    <property type="entry name" value="HATPase"/>
    <property type="match status" value="1"/>
</dbReference>
<dbReference type="Gene3D" id="3.30.565.10">
    <property type="entry name" value="Histidine kinase-like ATPase, C-terminal domain"/>
    <property type="match status" value="1"/>
</dbReference>
<dbReference type="InterPro" id="IPR036890">
    <property type="entry name" value="HATPase_C_sf"/>
</dbReference>
<dbReference type="InterPro" id="IPR050428">
    <property type="entry name" value="TCS_sensor_his_kinase"/>
</dbReference>
<dbReference type="PANTHER" id="PTHR45436:SF5">
    <property type="entry name" value="SENSOR HISTIDINE KINASE TRCS"/>
    <property type="match status" value="1"/>
</dbReference>
<dbReference type="PANTHER" id="PTHR45436">
    <property type="entry name" value="SENSOR HISTIDINE KINASE YKOH"/>
    <property type="match status" value="1"/>
</dbReference>
<dbReference type="Pfam" id="PF02518">
    <property type="entry name" value="HATPase_c"/>
    <property type="match status" value="1"/>
</dbReference>
<dbReference type="SUPFAM" id="SSF55874">
    <property type="entry name" value="ATPase domain of HSP90 chaperone/DNA topoisomerase II/histidine kinase"/>
    <property type="match status" value="1"/>
</dbReference>
<gene>
    <name evidence="5" type="primary">CSK</name>
    <name evidence="8" type="ORF">PHATRDRAFT_41268</name>
</gene>
<reference key="1">
    <citation type="journal article" date="2008" name="Nature">
        <title>The Phaeodactylum genome reveals the evolutionary history of diatom genomes.</title>
        <authorList>
            <person name="Bowler C."/>
            <person name="Allen A.E."/>
            <person name="Badger J.H."/>
            <person name="Grimwood J."/>
            <person name="Jabbari K."/>
            <person name="Kuo A."/>
            <person name="Maheswari U."/>
            <person name="Martens C."/>
            <person name="Maumus F."/>
            <person name="Otillar R.P."/>
            <person name="Rayko E."/>
            <person name="Salamov A."/>
            <person name="Vandepoele K."/>
            <person name="Beszteri B."/>
            <person name="Gruber A."/>
            <person name="Heijde M."/>
            <person name="Katinka M."/>
            <person name="Mock T."/>
            <person name="Valentin K."/>
            <person name="Verret F."/>
            <person name="Berges J.A."/>
            <person name="Brownlee C."/>
            <person name="Cadoret J.P."/>
            <person name="Chiovitti A."/>
            <person name="Choi C.J."/>
            <person name="Coesel S."/>
            <person name="De Martino A."/>
            <person name="Detter J.C."/>
            <person name="Durkin C."/>
            <person name="Falciatore A."/>
            <person name="Fournet J."/>
            <person name="Haruta M."/>
            <person name="Huysman M.J."/>
            <person name="Jenkins B.D."/>
            <person name="Jiroutova K."/>
            <person name="Jorgensen R.E."/>
            <person name="Joubert Y."/>
            <person name="Kaplan A."/>
            <person name="Kroger N."/>
            <person name="Kroth P.G."/>
            <person name="La Roche J."/>
            <person name="Lindquist E."/>
            <person name="Lommer M."/>
            <person name="Martin-Jezequel V."/>
            <person name="Lopez P.J."/>
            <person name="Lucas S."/>
            <person name="Mangogna M."/>
            <person name="McGinnis K."/>
            <person name="Medlin L.K."/>
            <person name="Montsant A."/>
            <person name="Oudot-Le Secq M.P."/>
            <person name="Napoli C."/>
            <person name="Obornik M."/>
            <person name="Parker M.S."/>
            <person name="Petit J.L."/>
            <person name="Porcel B.M."/>
            <person name="Poulsen N."/>
            <person name="Robison M."/>
            <person name="Rychlewski L."/>
            <person name="Rynearson T.A."/>
            <person name="Schmutz J."/>
            <person name="Shapiro H."/>
            <person name="Siaut M."/>
            <person name="Stanley M."/>
            <person name="Sussman M.R."/>
            <person name="Taylor A.R."/>
            <person name="Vardi A."/>
            <person name="von Dassow P."/>
            <person name="Vyverman W."/>
            <person name="Willis A."/>
            <person name="Wyrwicz L.S."/>
            <person name="Rokhsar D.S."/>
            <person name="Weissenbach J."/>
            <person name="Armbrust E.V."/>
            <person name="Green B.R."/>
            <person name="Van de Peer Y."/>
            <person name="Grigoriev I.V."/>
        </authorList>
    </citation>
    <scope>NUCLEOTIDE SEQUENCE [LARGE SCALE GENOMIC DNA]</scope>
    <source>
        <strain>CCAP 1055/1</strain>
    </source>
</reference>
<reference key="2">
    <citation type="submission" date="2008-08" db="EMBL/GenBank/DDBJ databases">
        <authorList>
            <consortium name="Diatom Consortium"/>
            <person name="Grigoriev I."/>
            <person name="Grimwood J."/>
            <person name="Kuo A."/>
            <person name="Otillar R.P."/>
            <person name="Salamov A."/>
            <person name="Detter J.C."/>
            <person name="Lindquist E."/>
            <person name="Shapiro H."/>
            <person name="Lucas S."/>
            <person name="Glavina del Rio T."/>
            <person name="Pitluck S."/>
            <person name="Rokhsar D."/>
            <person name="Bowler C."/>
        </authorList>
    </citation>
    <scope>GENOME REANNOTATION</scope>
    <source>
        <strain>CCAP 1055/1</strain>
    </source>
</reference>
<reference key="3">
    <citation type="journal article" date="2015" name="Plant J.">
        <title>Plastid proteome prediction for diatoms and other algae with secondary plastids of the red lineage.</title>
        <authorList>
            <person name="Gruber A."/>
            <person name="Rocap G."/>
            <person name="Kroth P.G."/>
            <person name="Armbrust E.V."/>
            <person name="Mock T."/>
        </authorList>
    </citation>
    <scope>SEQUENCE REVISION TO N-TERMINUS</scope>
    <scope>TRANSIT PEPTIDE</scope>
</reference>
<reference key="4">
    <citation type="journal article" date="2020" name="Commun. Biol.">
        <title>An evolutionarily conserved iron-sulfur cluster underlies redox sensory function of the Chloroplast Sensor Kinase.</title>
        <authorList>
            <person name="Ibrahim I.M."/>
            <person name="Wu H."/>
            <person name="Ezhov R."/>
            <person name="Kayanja G.E."/>
            <person name="Zakharov S.D."/>
            <person name="Du Y."/>
            <person name="Tao W.A."/>
            <person name="Pushkar Y."/>
            <person name="Cramer W.A."/>
            <person name="Puthiyaveetil S."/>
        </authorList>
    </citation>
    <scope>FUNCTION</scope>
    <scope>COFACTOR</scope>
</reference>
<accession>B7GDS0</accession>
<organism>
    <name type="scientific">Phaeodactylum tricornutum (strain CCAP 1055/1)</name>
    <dbReference type="NCBI Taxonomy" id="556484"/>
    <lineage>
        <taxon>Eukaryota</taxon>
        <taxon>Sar</taxon>
        <taxon>Stramenopiles</taxon>
        <taxon>Ochrophyta</taxon>
        <taxon>Bacillariophyta</taxon>
        <taxon>Bacillariophyceae</taxon>
        <taxon>Bacillariophycidae</taxon>
        <taxon>Naviculales</taxon>
        <taxon>Phaeodactylaceae</taxon>
        <taxon>Phaeodactylum</taxon>
    </lineage>
</organism>
<proteinExistence type="inferred from homology"/>
<comment type="function">
    <text evidence="1 7">Sensor kinase that senses the plastoquinone (PQ) redox state involved in stoichiometry adjustment of both photosystems (e.g. long-term adaptation via transcriptional regulation of reaction center genes of photosystems I and II) and state transitions (e.g. short-term adaptation involving reversible post-translational phosphorylation of light-harvesting complex II, LHC II), thus linking photosynthesis with gene expression in chloroplasts (By similarity). Reduced PQ suppresses its autophosphorylation activity (Probable).</text>
</comment>
<comment type="catalytic activity">
    <reaction evidence="1">
        <text>ATP + protein L-histidine = ADP + protein N-phospho-L-histidine.</text>
        <dbReference type="EC" id="2.7.13.3"/>
    </reaction>
</comment>
<comment type="cofactor">
    <cofactor evidence="4">
        <name>[3Fe-4S] cluster</name>
        <dbReference type="ChEBI" id="CHEBI:21137"/>
    </cofactor>
    <text evidence="4">The 3Fe-4S cluster is redox-responsive, probably binds 1 cluster per monomer.</text>
</comment>
<comment type="subunit">
    <text evidence="1">Oligomerizes.</text>
</comment>
<comment type="subcellular location">
    <subcellularLocation>
        <location evidence="6">Plastid</location>
        <location evidence="6">Chloroplast stroma</location>
    </subcellularLocation>
    <text evidence="6">In this organism the plastid is the result of a secondary endosymbiosis event, and is found within the endomembrane system, necessitating a complex targeting process.</text>
</comment>
<comment type="PTM">
    <text evidence="7">Autophosphorylates, possibly on His-292.</text>
</comment>
<comment type="miscellaneous">
    <text evidence="6">Probably has a bipartite transit peptide. The signal to cross the ER endomembrane system is probably residues 1-31 while the transit peptide is probably residues 32-50.</text>
</comment>
<comment type="similarity">
    <text evidence="7">Belongs to the chloroplast sensor kinase protein family.</text>
</comment>
<comment type="sequence caution" evidence="6">
    <conflict type="erroneous initiation">
        <sequence resource="EMBL-CDS" id="EEC43310"/>
    </conflict>
    <text>Extended N-terminus.</text>
</comment>